<dbReference type="EC" id="6.3.2.1" evidence="1"/>
<dbReference type="EMBL" id="CP000247">
    <property type="protein sequence ID" value="ABG68182.1"/>
    <property type="molecule type" value="Genomic_DNA"/>
</dbReference>
<dbReference type="RefSeq" id="WP_000905378.1">
    <property type="nucleotide sequence ID" value="NC_008253.1"/>
</dbReference>
<dbReference type="SMR" id="Q0TLJ9"/>
<dbReference type="KEGG" id="ecp:ECP_0142"/>
<dbReference type="HOGENOM" id="CLU_047148_0_0_6"/>
<dbReference type="UniPathway" id="UPA00028">
    <property type="reaction ID" value="UER00005"/>
</dbReference>
<dbReference type="Proteomes" id="UP000009182">
    <property type="component" value="Chromosome"/>
</dbReference>
<dbReference type="GO" id="GO:0005829">
    <property type="term" value="C:cytosol"/>
    <property type="evidence" value="ECO:0007669"/>
    <property type="project" value="TreeGrafter"/>
</dbReference>
<dbReference type="GO" id="GO:0005524">
    <property type="term" value="F:ATP binding"/>
    <property type="evidence" value="ECO:0007669"/>
    <property type="project" value="UniProtKB-KW"/>
</dbReference>
<dbReference type="GO" id="GO:0004592">
    <property type="term" value="F:pantoate-beta-alanine ligase activity"/>
    <property type="evidence" value="ECO:0007669"/>
    <property type="project" value="UniProtKB-UniRule"/>
</dbReference>
<dbReference type="GO" id="GO:0015940">
    <property type="term" value="P:pantothenate biosynthetic process"/>
    <property type="evidence" value="ECO:0007669"/>
    <property type="project" value="UniProtKB-UniRule"/>
</dbReference>
<dbReference type="CDD" id="cd00560">
    <property type="entry name" value="PanC"/>
    <property type="match status" value="1"/>
</dbReference>
<dbReference type="FunFam" id="3.30.1300.10:FF:000001">
    <property type="entry name" value="Pantothenate synthetase"/>
    <property type="match status" value="1"/>
</dbReference>
<dbReference type="FunFam" id="3.40.50.620:FF:000013">
    <property type="entry name" value="Pantothenate synthetase"/>
    <property type="match status" value="1"/>
</dbReference>
<dbReference type="Gene3D" id="3.40.50.620">
    <property type="entry name" value="HUPs"/>
    <property type="match status" value="1"/>
</dbReference>
<dbReference type="Gene3D" id="3.30.1300.10">
    <property type="entry name" value="Pantoate-beta-alanine ligase, C-terminal domain"/>
    <property type="match status" value="1"/>
</dbReference>
<dbReference type="HAMAP" id="MF_00158">
    <property type="entry name" value="PanC"/>
    <property type="match status" value="1"/>
</dbReference>
<dbReference type="InterPro" id="IPR004821">
    <property type="entry name" value="Cyt_trans-like"/>
</dbReference>
<dbReference type="InterPro" id="IPR003721">
    <property type="entry name" value="Pantoate_ligase"/>
</dbReference>
<dbReference type="InterPro" id="IPR042176">
    <property type="entry name" value="Pantoate_ligase_C"/>
</dbReference>
<dbReference type="InterPro" id="IPR014729">
    <property type="entry name" value="Rossmann-like_a/b/a_fold"/>
</dbReference>
<dbReference type="NCBIfam" id="TIGR00125">
    <property type="entry name" value="cyt_tran_rel"/>
    <property type="match status" value="1"/>
</dbReference>
<dbReference type="NCBIfam" id="TIGR00018">
    <property type="entry name" value="panC"/>
    <property type="match status" value="1"/>
</dbReference>
<dbReference type="PANTHER" id="PTHR21299">
    <property type="entry name" value="CYTIDYLATE KINASE/PANTOATE-BETA-ALANINE LIGASE"/>
    <property type="match status" value="1"/>
</dbReference>
<dbReference type="PANTHER" id="PTHR21299:SF1">
    <property type="entry name" value="PANTOATE--BETA-ALANINE LIGASE"/>
    <property type="match status" value="1"/>
</dbReference>
<dbReference type="Pfam" id="PF02569">
    <property type="entry name" value="Pantoate_ligase"/>
    <property type="match status" value="1"/>
</dbReference>
<dbReference type="SUPFAM" id="SSF52374">
    <property type="entry name" value="Nucleotidylyl transferase"/>
    <property type="match status" value="1"/>
</dbReference>
<feature type="chain" id="PRO_0000305445" description="Pantothenate synthetase">
    <location>
        <begin position="1"/>
        <end position="283"/>
    </location>
</feature>
<feature type="active site" description="Proton donor" evidence="1">
    <location>
        <position position="37"/>
    </location>
</feature>
<feature type="binding site" evidence="1">
    <location>
        <begin position="30"/>
        <end position="37"/>
    </location>
    <ligand>
        <name>ATP</name>
        <dbReference type="ChEBI" id="CHEBI:30616"/>
    </ligand>
</feature>
<feature type="binding site" evidence="1">
    <location>
        <position position="61"/>
    </location>
    <ligand>
        <name>(R)-pantoate</name>
        <dbReference type="ChEBI" id="CHEBI:15980"/>
    </ligand>
</feature>
<feature type="binding site" evidence="1">
    <location>
        <position position="61"/>
    </location>
    <ligand>
        <name>beta-alanine</name>
        <dbReference type="ChEBI" id="CHEBI:57966"/>
    </ligand>
</feature>
<feature type="binding site" evidence="1">
    <location>
        <begin position="149"/>
        <end position="152"/>
    </location>
    <ligand>
        <name>ATP</name>
        <dbReference type="ChEBI" id="CHEBI:30616"/>
    </ligand>
</feature>
<feature type="binding site" evidence="1">
    <location>
        <position position="155"/>
    </location>
    <ligand>
        <name>(R)-pantoate</name>
        <dbReference type="ChEBI" id="CHEBI:15980"/>
    </ligand>
</feature>
<feature type="binding site" evidence="1">
    <location>
        <begin position="186"/>
        <end position="189"/>
    </location>
    <ligand>
        <name>ATP</name>
        <dbReference type="ChEBI" id="CHEBI:30616"/>
    </ligand>
</feature>
<keyword id="KW-0067">ATP-binding</keyword>
<keyword id="KW-0963">Cytoplasm</keyword>
<keyword id="KW-0436">Ligase</keyword>
<keyword id="KW-0547">Nucleotide-binding</keyword>
<keyword id="KW-0566">Pantothenate biosynthesis</keyword>
<evidence type="ECO:0000255" key="1">
    <source>
        <dbReference type="HAMAP-Rule" id="MF_00158"/>
    </source>
</evidence>
<accession>Q0TLJ9</accession>
<protein>
    <recommendedName>
        <fullName evidence="1">Pantothenate synthetase</fullName>
        <shortName evidence="1">PS</shortName>
        <ecNumber evidence="1">6.3.2.1</ecNumber>
    </recommendedName>
    <alternativeName>
        <fullName evidence="1">Pantoate--beta-alanine ligase</fullName>
    </alternativeName>
    <alternativeName>
        <fullName evidence="1">Pantoate-activating enzyme</fullName>
    </alternativeName>
</protein>
<sequence length="283" mass="31593">MLIIETLPLLRQQIRRLRMEGKRVALVPTMGNLHDGHMKLVDEAKARADVVVVSIFVNPMQFDRPEDLARYPRTLQEDCEKLNKRKVDLVFAPSVKEIYPNGTETHTYVDVPGLSTMLEGASRPGHFRGVSTIVSKLFNLVQPDIACFGEKDFQQLALIRKMVADMGFDIEIVGVPIMRAKDGLALSSRNGYLTAEQRKIAPGLYKVLSSIADKLQAGERDLDEIIAIAGQELNEKGFRSDDIQIRDADTLLEISENSKRAVILVAAWLGDARLIDNKLVELA</sequence>
<reference key="1">
    <citation type="journal article" date="2006" name="Mol. Microbiol.">
        <title>Role of pathogenicity island-associated integrases in the genome plasticity of uropathogenic Escherichia coli strain 536.</title>
        <authorList>
            <person name="Hochhut B."/>
            <person name="Wilde C."/>
            <person name="Balling G."/>
            <person name="Middendorf B."/>
            <person name="Dobrindt U."/>
            <person name="Brzuszkiewicz E."/>
            <person name="Gottschalk G."/>
            <person name="Carniel E."/>
            <person name="Hacker J."/>
        </authorList>
    </citation>
    <scope>NUCLEOTIDE SEQUENCE [LARGE SCALE GENOMIC DNA]</scope>
    <source>
        <strain>536 / UPEC</strain>
    </source>
</reference>
<comment type="function">
    <text evidence="1">Catalyzes the condensation of pantoate with beta-alanine in an ATP-dependent reaction via a pantoyl-adenylate intermediate.</text>
</comment>
<comment type="catalytic activity">
    <reaction evidence="1">
        <text>(R)-pantoate + beta-alanine + ATP = (R)-pantothenate + AMP + diphosphate + H(+)</text>
        <dbReference type="Rhea" id="RHEA:10912"/>
        <dbReference type="ChEBI" id="CHEBI:15378"/>
        <dbReference type="ChEBI" id="CHEBI:15980"/>
        <dbReference type="ChEBI" id="CHEBI:29032"/>
        <dbReference type="ChEBI" id="CHEBI:30616"/>
        <dbReference type="ChEBI" id="CHEBI:33019"/>
        <dbReference type="ChEBI" id="CHEBI:57966"/>
        <dbReference type="ChEBI" id="CHEBI:456215"/>
        <dbReference type="EC" id="6.3.2.1"/>
    </reaction>
</comment>
<comment type="pathway">
    <text evidence="1">Cofactor biosynthesis; (R)-pantothenate biosynthesis; (R)-pantothenate from (R)-pantoate and beta-alanine: step 1/1.</text>
</comment>
<comment type="subunit">
    <text evidence="1">Homodimer.</text>
</comment>
<comment type="subcellular location">
    <subcellularLocation>
        <location evidence="1">Cytoplasm</location>
    </subcellularLocation>
</comment>
<comment type="miscellaneous">
    <text evidence="1">The reaction proceeds by a bi uni uni bi ping pong mechanism.</text>
</comment>
<comment type="similarity">
    <text evidence="1">Belongs to the pantothenate synthetase family.</text>
</comment>
<organism>
    <name type="scientific">Escherichia coli O6:K15:H31 (strain 536 / UPEC)</name>
    <dbReference type="NCBI Taxonomy" id="362663"/>
    <lineage>
        <taxon>Bacteria</taxon>
        <taxon>Pseudomonadati</taxon>
        <taxon>Pseudomonadota</taxon>
        <taxon>Gammaproteobacteria</taxon>
        <taxon>Enterobacterales</taxon>
        <taxon>Enterobacteriaceae</taxon>
        <taxon>Escherichia</taxon>
    </lineage>
</organism>
<name>PANC_ECOL5</name>
<gene>
    <name evidence="1" type="primary">panC</name>
    <name type="ordered locus">ECP_0142</name>
</gene>
<proteinExistence type="inferred from homology"/>